<organism>
    <name type="scientific">Pseudomonas syringae pv. syringae (strain B728a)</name>
    <dbReference type="NCBI Taxonomy" id="205918"/>
    <lineage>
        <taxon>Bacteria</taxon>
        <taxon>Pseudomonadati</taxon>
        <taxon>Pseudomonadota</taxon>
        <taxon>Gammaproteobacteria</taxon>
        <taxon>Pseudomonadales</taxon>
        <taxon>Pseudomonadaceae</taxon>
        <taxon>Pseudomonas</taxon>
        <taxon>Pseudomonas syringae</taxon>
    </lineage>
</organism>
<feature type="chain" id="PRO_0000242934" description="tRNA uridine(34) hydroxylase">
    <location>
        <begin position="1"/>
        <end position="312"/>
    </location>
</feature>
<feature type="domain" description="Rhodanese" evidence="1">
    <location>
        <begin position="124"/>
        <end position="218"/>
    </location>
</feature>
<feature type="region of interest" description="Disordered" evidence="2">
    <location>
        <begin position="293"/>
        <end position="312"/>
    </location>
</feature>
<feature type="active site" description="Cysteine persulfide intermediate" evidence="1">
    <location>
        <position position="178"/>
    </location>
</feature>
<accession>Q4ZQ82</accession>
<evidence type="ECO:0000255" key="1">
    <source>
        <dbReference type="HAMAP-Rule" id="MF_00469"/>
    </source>
</evidence>
<evidence type="ECO:0000256" key="2">
    <source>
        <dbReference type="SAM" id="MobiDB-lite"/>
    </source>
</evidence>
<gene>
    <name evidence="1" type="primary">trhO</name>
    <name type="ordered locus">Psyr_3658</name>
</gene>
<comment type="function">
    <text evidence="1">Catalyzes oxygen-dependent 5-hydroxyuridine (ho5U) modification at position 34 in tRNAs.</text>
</comment>
<comment type="catalytic activity">
    <reaction evidence="1">
        <text>uridine(34) in tRNA + AH2 + O2 = 5-hydroxyuridine(34) in tRNA + A + H2O</text>
        <dbReference type="Rhea" id="RHEA:64224"/>
        <dbReference type="Rhea" id="RHEA-COMP:11727"/>
        <dbReference type="Rhea" id="RHEA-COMP:13381"/>
        <dbReference type="ChEBI" id="CHEBI:13193"/>
        <dbReference type="ChEBI" id="CHEBI:15377"/>
        <dbReference type="ChEBI" id="CHEBI:15379"/>
        <dbReference type="ChEBI" id="CHEBI:17499"/>
        <dbReference type="ChEBI" id="CHEBI:65315"/>
        <dbReference type="ChEBI" id="CHEBI:136877"/>
    </reaction>
</comment>
<comment type="similarity">
    <text evidence="1">Belongs to the TrhO family.</text>
</comment>
<sequence>MTQPIVVAALYKFVTLSDYVELREPLLQAMVDNGIKGTLLIADEGINGTVSGSREGIDGLMAWLKSDPRLIDIDHKESYCDEQPFYRTKVKLKKEIVTLGVEGVDPNKSVGTYVEPKDWNDLISDPEVLLIDTRNDYEVSIGTFEGAIDPKTTSFREFPEYIKAHFDPAVHKKVAMFCTGGIRCEKASSYMLGEGFEEVYHLKGGILKYLEEVPEQESHWRGECFVFDNRVTVRHDLTEGDYDQCHACRTPISAEDRASEHYSPGVSCPHCWDSLSEKTRRSAIDRQKQIELAKARNQPHPIGRNYRLPSEA</sequence>
<reference key="1">
    <citation type="journal article" date="2005" name="Proc. Natl. Acad. Sci. U.S.A.">
        <title>Comparison of the complete genome sequences of Pseudomonas syringae pv. syringae B728a and pv. tomato DC3000.</title>
        <authorList>
            <person name="Feil H."/>
            <person name="Feil W.S."/>
            <person name="Chain P."/>
            <person name="Larimer F."/>
            <person name="Dibartolo G."/>
            <person name="Copeland A."/>
            <person name="Lykidis A."/>
            <person name="Trong S."/>
            <person name="Nolan M."/>
            <person name="Goltsman E."/>
            <person name="Thiel J."/>
            <person name="Malfatti S."/>
            <person name="Loper J.E."/>
            <person name="Lapidus A."/>
            <person name="Detter J.C."/>
            <person name="Land M."/>
            <person name="Richardson P.M."/>
            <person name="Kyrpides N.C."/>
            <person name="Ivanova N."/>
            <person name="Lindow S.E."/>
        </authorList>
    </citation>
    <scope>NUCLEOTIDE SEQUENCE [LARGE SCALE GENOMIC DNA]</scope>
    <source>
        <strain>B728a</strain>
    </source>
</reference>
<dbReference type="EC" id="1.14.-.-" evidence="1"/>
<dbReference type="EMBL" id="CP000075">
    <property type="protein sequence ID" value="AAY38690.1"/>
    <property type="molecule type" value="Genomic_DNA"/>
</dbReference>
<dbReference type="RefSeq" id="WP_032607335.1">
    <property type="nucleotide sequence ID" value="NC_007005.1"/>
</dbReference>
<dbReference type="RefSeq" id="YP_236728.1">
    <property type="nucleotide sequence ID" value="NC_007005.1"/>
</dbReference>
<dbReference type="SMR" id="Q4ZQ82"/>
<dbReference type="STRING" id="205918.Psyr_3658"/>
<dbReference type="KEGG" id="psb:Psyr_3658"/>
<dbReference type="PATRIC" id="fig|205918.7.peg.3756"/>
<dbReference type="eggNOG" id="COG1054">
    <property type="taxonomic scope" value="Bacteria"/>
</dbReference>
<dbReference type="HOGENOM" id="CLU_038878_0_0_6"/>
<dbReference type="OrthoDB" id="9778326at2"/>
<dbReference type="Proteomes" id="UP000000426">
    <property type="component" value="Chromosome"/>
</dbReference>
<dbReference type="GO" id="GO:0016705">
    <property type="term" value="F:oxidoreductase activity, acting on paired donors, with incorporation or reduction of molecular oxygen"/>
    <property type="evidence" value="ECO:0007669"/>
    <property type="project" value="UniProtKB-UniRule"/>
</dbReference>
<dbReference type="GO" id="GO:0006400">
    <property type="term" value="P:tRNA modification"/>
    <property type="evidence" value="ECO:0007669"/>
    <property type="project" value="UniProtKB-UniRule"/>
</dbReference>
<dbReference type="CDD" id="cd01518">
    <property type="entry name" value="RHOD_YceA"/>
    <property type="match status" value="1"/>
</dbReference>
<dbReference type="Gene3D" id="3.30.70.100">
    <property type="match status" value="1"/>
</dbReference>
<dbReference type="Gene3D" id="3.40.250.10">
    <property type="entry name" value="Rhodanese-like domain"/>
    <property type="match status" value="1"/>
</dbReference>
<dbReference type="HAMAP" id="MF_00469">
    <property type="entry name" value="TrhO"/>
    <property type="match status" value="1"/>
</dbReference>
<dbReference type="InterPro" id="IPR001763">
    <property type="entry name" value="Rhodanese-like_dom"/>
</dbReference>
<dbReference type="InterPro" id="IPR036873">
    <property type="entry name" value="Rhodanese-like_dom_sf"/>
</dbReference>
<dbReference type="InterPro" id="IPR020936">
    <property type="entry name" value="TrhO"/>
</dbReference>
<dbReference type="InterPro" id="IPR040503">
    <property type="entry name" value="TRHO_N"/>
</dbReference>
<dbReference type="NCBIfam" id="NF001136">
    <property type="entry name" value="PRK00142.1-4"/>
    <property type="match status" value="1"/>
</dbReference>
<dbReference type="PANTHER" id="PTHR43268:SF3">
    <property type="entry name" value="RHODANESE-LIKE DOMAIN-CONTAINING PROTEIN 7-RELATED"/>
    <property type="match status" value="1"/>
</dbReference>
<dbReference type="PANTHER" id="PTHR43268">
    <property type="entry name" value="THIOSULFATE SULFURTRANSFERASE/RHODANESE-LIKE DOMAIN-CONTAINING PROTEIN 2"/>
    <property type="match status" value="1"/>
</dbReference>
<dbReference type="Pfam" id="PF00581">
    <property type="entry name" value="Rhodanese"/>
    <property type="match status" value="1"/>
</dbReference>
<dbReference type="Pfam" id="PF17773">
    <property type="entry name" value="UPF0176_N"/>
    <property type="match status" value="1"/>
</dbReference>
<dbReference type="SMART" id="SM00450">
    <property type="entry name" value="RHOD"/>
    <property type="match status" value="1"/>
</dbReference>
<dbReference type="SUPFAM" id="SSF52821">
    <property type="entry name" value="Rhodanese/Cell cycle control phosphatase"/>
    <property type="match status" value="1"/>
</dbReference>
<dbReference type="PROSITE" id="PS50206">
    <property type="entry name" value="RHODANESE_3"/>
    <property type="match status" value="1"/>
</dbReference>
<protein>
    <recommendedName>
        <fullName evidence="1">tRNA uridine(34) hydroxylase</fullName>
        <ecNumber evidence="1">1.14.-.-</ecNumber>
    </recommendedName>
    <alternativeName>
        <fullName evidence="1">tRNA hydroxylation protein O</fullName>
    </alternativeName>
</protein>
<keyword id="KW-0560">Oxidoreductase</keyword>
<keyword id="KW-0819">tRNA processing</keyword>
<name>TRHO_PSEU2</name>
<proteinExistence type="inferred from homology"/>